<keyword id="KW-1185">Reference proteome</keyword>
<evidence type="ECO:0000256" key="1">
    <source>
        <dbReference type="SAM" id="MobiDB-lite"/>
    </source>
</evidence>
<evidence type="ECO:0000305" key="2"/>
<dbReference type="EMBL" id="AK092263">
    <property type="protein sequence ID" value="BAC03841.1"/>
    <property type="molecule type" value="mRNA"/>
</dbReference>
<dbReference type="EMBL" id="CH471192">
    <property type="protein sequence ID" value="EAW52191.1"/>
    <property type="molecule type" value="Genomic_DNA"/>
</dbReference>
<dbReference type="GlyGen" id="Q494R0">
    <property type="glycosylation" value="1 site"/>
</dbReference>
<dbReference type="BioMuta" id="HGNC:27557"/>
<dbReference type="AGR" id="HGNC:27557"/>
<dbReference type="GeneCards" id="FBXL19-AS1"/>
<dbReference type="HGNC" id="HGNC:27557">
    <property type="gene designation" value="FBXL19-AS1"/>
</dbReference>
<dbReference type="neXtProt" id="NX_Q494R0"/>
<dbReference type="InParanoid" id="Q494R0"/>
<dbReference type="PAN-GO" id="Q494R0">
    <property type="GO annotations" value="0 GO annotations based on evolutionary models"/>
</dbReference>
<dbReference type="PathwayCommons" id="Q494R0"/>
<dbReference type="Pharos" id="Q494R0">
    <property type="development level" value="Tdark"/>
</dbReference>
<dbReference type="Proteomes" id="UP000005640">
    <property type="component" value="Unplaced"/>
</dbReference>
<dbReference type="RNAct" id="Q494R0">
    <property type="molecule type" value="protein"/>
</dbReference>
<comment type="caution">
    <text evidence="2">Product of a dubious CDS prediction. Probable non-coding RNA.</text>
</comment>
<protein>
    <recommendedName>
        <fullName>Putative uncharacterized protein FBXL19-AS1</fullName>
    </recommendedName>
    <alternativeName>
        <fullName>FBXL19 antisense RNA 1</fullName>
    </alternativeName>
    <alternativeName>
        <fullName>FBXL19 antisense gene protein 1</fullName>
    </alternativeName>
</protein>
<accession>Q494R0</accession>
<accession>Q3KR42</accession>
<accession>Q8NAQ9</accession>
<gene>
    <name type="primary">FBXL19-AS1</name>
    <name type="synonym">NCRNA00095</name>
</gene>
<proteinExistence type="uncertain"/>
<sequence length="122" mass="13218">MAEPGGRGDYRKDGRLPSLSRSPLSTTLGTSPACGLEIPPTSGARPDGSCSLPAPVYHLKSRQWKGMGRGYRQRWRLQGRGDCDMGCVVQASGLFPAEMRERTTKKMATSPLDLCAGACWEM</sequence>
<reference key="1">
    <citation type="journal article" date="2004" name="Nat. Genet.">
        <title>Complete sequencing and characterization of 21,243 full-length human cDNAs.</title>
        <authorList>
            <person name="Ota T."/>
            <person name="Suzuki Y."/>
            <person name="Nishikawa T."/>
            <person name="Otsuki T."/>
            <person name="Sugiyama T."/>
            <person name="Irie R."/>
            <person name="Wakamatsu A."/>
            <person name="Hayashi K."/>
            <person name="Sato H."/>
            <person name="Nagai K."/>
            <person name="Kimura K."/>
            <person name="Makita H."/>
            <person name="Sekine M."/>
            <person name="Obayashi M."/>
            <person name="Nishi T."/>
            <person name="Shibahara T."/>
            <person name="Tanaka T."/>
            <person name="Ishii S."/>
            <person name="Yamamoto J."/>
            <person name="Saito K."/>
            <person name="Kawai Y."/>
            <person name="Isono Y."/>
            <person name="Nakamura Y."/>
            <person name="Nagahari K."/>
            <person name="Murakami K."/>
            <person name="Yasuda T."/>
            <person name="Iwayanagi T."/>
            <person name="Wagatsuma M."/>
            <person name="Shiratori A."/>
            <person name="Sudo H."/>
            <person name="Hosoiri T."/>
            <person name="Kaku Y."/>
            <person name="Kodaira H."/>
            <person name="Kondo H."/>
            <person name="Sugawara M."/>
            <person name="Takahashi M."/>
            <person name="Kanda K."/>
            <person name="Yokoi T."/>
            <person name="Furuya T."/>
            <person name="Kikkawa E."/>
            <person name="Omura Y."/>
            <person name="Abe K."/>
            <person name="Kamihara K."/>
            <person name="Katsuta N."/>
            <person name="Sato K."/>
            <person name="Tanikawa M."/>
            <person name="Yamazaki M."/>
            <person name="Ninomiya K."/>
            <person name="Ishibashi T."/>
            <person name="Yamashita H."/>
            <person name="Murakawa K."/>
            <person name="Fujimori K."/>
            <person name="Tanai H."/>
            <person name="Kimata M."/>
            <person name="Watanabe M."/>
            <person name="Hiraoka S."/>
            <person name="Chiba Y."/>
            <person name="Ishida S."/>
            <person name="Ono Y."/>
            <person name="Takiguchi S."/>
            <person name="Watanabe S."/>
            <person name="Yosida M."/>
            <person name="Hotuta T."/>
            <person name="Kusano J."/>
            <person name="Kanehori K."/>
            <person name="Takahashi-Fujii A."/>
            <person name="Hara H."/>
            <person name="Tanase T.-O."/>
            <person name="Nomura Y."/>
            <person name="Togiya S."/>
            <person name="Komai F."/>
            <person name="Hara R."/>
            <person name="Takeuchi K."/>
            <person name="Arita M."/>
            <person name="Imose N."/>
            <person name="Musashino K."/>
            <person name="Yuuki H."/>
            <person name="Oshima A."/>
            <person name="Sasaki N."/>
            <person name="Aotsuka S."/>
            <person name="Yoshikawa Y."/>
            <person name="Matsunawa H."/>
            <person name="Ichihara T."/>
            <person name="Shiohata N."/>
            <person name="Sano S."/>
            <person name="Moriya S."/>
            <person name="Momiyama H."/>
            <person name="Satoh N."/>
            <person name="Takami S."/>
            <person name="Terashima Y."/>
            <person name="Suzuki O."/>
            <person name="Nakagawa S."/>
            <person name="Senoh A."/>
            <person name="Mizoguchi H."/>
            <person name="Goto Y."/>
            <person name="Shimizu F."/>
            <person name="Wakebe H."/>
            <person name="Hishigaki H."/>
            <person name="Watanabe T."/>
            <person name="Sugiyama A."/>
            <person name="Takemoto M."/>
            <person name="Kawakami B."/>
            <person name="Yamazaki M."/>
            <person name="Watanabe K."/>
            <person name="Kumagai A."/>
            <person name="Itakura S."/>
            <person name="Fukuzumi Y."/>
            <person name="Fujimori Y."/>
            <person name="Komiyama M."/>
            <person name="Tashiro H."/>
            <person name="Tanigami A."/>
            <person name="Fujiwara T."/>
            <person name="Ono T."/>
            <person name="Yamada K."/>
            <person name="Fujii Y."/>
            <person name="Ozaki K."/>
            <person name="Hirao M."/>
            <person name="Ohmori Y."/>
            <person name="Kawabata A."/>
            <person name="Hikiji T."/>
            <person name="Kobatake N."/>
            <person name="Inagaki H."/>
            <person name="Ikema Y."/>
            <person name="Okamoto S."/>
            <person name="Okitani R."/>
            <person name="Kawakami T."/>
            <person name="Noguchi S."/>
            <person name="Itoh T."/>
            <person name="Shigeta K."/>
            <person name="Senba T."/>
            <person name="Matsumura K."/>
            <person name="Nakajima Y."/>
            <person name="Mizuno T."/>
            <person name="Morinaga M."/>
            <person name="Sasaki M."/>
            <person name="Togashi T."/>
            <person name="Oyama M."/>
            <person name="Hata H."/>
            <person name="Watanabe M."/>
            <person name="Komatsu T."/>
            <person name="Mizushima-Sugano J."/>
            <person name="Satoh T."/>
            <person name="Shirai Y."/>
            <person name="Takahashi Y."/>
            <person name="Nakagawa K."/>
            <person name="Okumura K."/>
            <person name="Nagase T."/>
            <person name="Nomura N."/>
            <person name="Kikuchi H."/>
            <person name="Masuho Y."/>
            <person name="Yamashita R."/>
            <person name="Nakai K."/>
            <person name="Yada T."/>
            <person name="Nakamura Y."/>
            <person name="Ohara O."/>
            <person name="Isogai T."/>
            <person name="Sugano S."/>
        </authorList>
    </citation>
    <scope>NUCLEOTIDE SEQUENCE [LARGE SCALE MRNA]</scope>
    <source>
        <tissue>Teratocarcinoma</tissue>
    </source>
</reference>
<reference key="2">
    <citation type="submission" date="2005-07" db="EMBL/GenBank/DDBJ databases">
        <authorList>
            <person name="Mural R.J."/>
            <person name="Istrail S."/>
            <person name="Sutton G.G."/>
            <person name="Florea L."/>
            <person name="Halpern A.L."/>
            <person name="Mobarry C.M."/>
            <person name="Lippert R."/>
            <person name="Walenz B."/>
            <person name="Shatkay H."/>
            <person name="Dew I."/>
            <person name="Miller J.R."/>
            <person name="Flanigan M.J."/>
            <person name="Edwards N.J."/>
            <person name="Bolanos R."/>
            <person name="Fasulo D."/>
            <person name="Halldorsson B.V."/>
            <person name="Hannenhalli S."/>
            <person name="Turner R."/>
            <person name="Yooseph S."/>
            <person name="Lu F."/>
            <person name="Nusskern D.R."/>
            <person name="Shue B.C."/>
            <person name="Zheng X.H."/>
            <person name="Zhong F."/>
            <person name="Delcher A.L."/>
            <person name="Huson D.H."/>
            <person name="Kravitz S.A."/>
            <person name="Mouchard L."/>
            <person name="Reinert K."/>
            <person name="Remington K.A."/>
            <person name="Clark A.G."/>
            <person name="Waterman M.S."/>
            <person name="Eichler E.E."/>
            <person name="Adams M.D."/>
            <person name="Hunkapiller M.W."/>
            <person name="Myers E.W."/>
            <person name="Venter J.C."/>
        </authorList>
    </citation>
    <scope>NUCLEOTIDE SEQUENCE [LARGE SCALE GENOMIC DNA]</scope>
</reference>
<organism>
    <name type="scientific">Homo sapiens</name>
    <name type="common">Human</name>
    <dbReference type="NCBI Taxonomy" id="9606"/>
    <lineage>
        <taxon>Eukaryota</taxon>
        <taxon>Metazoa</taxon>
        <taxon>Chordata</taxon>
        <taxon>Craniata</taxon>
        <taxon>Vertebrata</taxon>
        <taxon>Euteleostomi</taxon>
        <taxon>Mammalia</taxon>
        <taxon>Eutheria</taxon>
        <taxon>Euarchontoglires</taxon>
        <taxon>Primates</taxon>
        <taxon>Haplorrhini</taxon>
        <taxon>Catarrhini</taxon>
        <taxon>Hominidae</taxon>
        <taxon>Homo</taxon>
    </lineage>
</organism>
<feature type="chain" id="PRO_0000340231" description="Putative uncharacterized protein FBXL19-AS1">
    <location>
        <begin position="1"/>
        <end position="122"/>
    </location>
</feature>
<feature type="region of interest" description="Disordered" evidence="1">
    <location>
        <begin position="1"/>
        <end position="49"/>
    </location>
</feature>
<feature type="compositionally biased region" description="Basic and acidic residues" evidence="1">
    <location>
        <begin position="1"/>
        <end position="15"/>
    </location>
</feature>
<feature type="compositionally biased region" description="Low complexity" evidence="1">
    <location>
        <begin position="16"/>
        <end position="32"/>
    </location>
</feature>
<name>FBAS1_HUMAN</name>